<name>HBB_ALOBE</name>
<keyword id="KW-0007">Acetylation</keyword>
<keyword id="KW-0349">Heme</keyword>
<keyword id="KW-0408">Iron</keyword>
<keyword id="KW-0479">Metal-binding</keyword>
<keyword id="KW-0561">Oxygen transport</keyword>
<keyword id="KW-0597">Phosphoprotein</keyword>
<keyword id="KW-0702">S-nitrosylation</keyword>
<keyword id="KW-0813">Transport</keyword>
<protein>
    <recommendedName>
        <fullName>Hemoglobin subunit beta</fullName>
    </recommendedName>
    <alternativeName>
        <fullName>Beta-globin</fullName>
    </alternativeName>
    <alternativeName>
        <fullName>Hemoglobin beta chain</fullName>
    </alternativeName>
</protein>
<evidence type="ECO:0000250" key="1">
    <source>
        <dbReference type="UniProtKB" id="P02086"/>
    </source>
</evidence>
<evidence type="ECO:0000250" key="2">
    <source>
        <dbReference type="UniProtKB" id="P68871"/>
    </source>
</evidence>
<evidence type="ECO:0000255" key="3">
    <source>
        <dbReference type="PROSITE-ProRule" id="PRU00238"/>
    </source>
</evidence>
<dbReference type="EMBL" id="AY279110">
    <property type="protein sequence ID" value="AAQ18218.1"/>
    <property type="molecule type" value="Genomic_DNA"/>
</dbReference>
<dbReference type="SMR" id="Q6WN29"/>
<dbReference type="GO" id="GO:0072562">
    <property type="term" value="C:blood microparticle"/>
    <property type="evidence" value="ECO:0007669"/>
    <property type="project" value="TreeGrafter"/>
</dbReference>
<dbReference type="GO" id="GO:0031838">
    <property type="term" value="C:haptoglobin-hemoglobin complex"/>
    <property type="evidence" value="ECO:0007669"/>
    <property type="project" value="TreeGrafter"/>
</dbReference>
<dbReference type="GO" id="GO:0005833">
    <property type="term" value="C:hemoglobin complex"/>
    <property type="evidence" value="ECO:0007669"/>
    <property type="project" value="InterPro"/>
</dbReference>
<dbReference type="GO" id="GO:0031720">
    <property type="term" value="F:haptoglobin binding"/>
    <property type="evidence" value="ECO:0007669"/>
    <property type="project" value="TreeGrafter"/>
</dbReference>
<dbReference type="GO" id="GO:0020037">
    <property type="term" value="F:heme binding"/>
    <property type="evidence" value="ECO:0007669"/>
    <property type="project" value="InterPro"/>
</dbReference>
<dbReference type="GO" id="GO:0031721">
    <property type="term" value="F:hemoglobin alpha binding"/>
    <property type="evidence" value="ECO:0007669"/>
    <property type="project" value="TreeGrafter"/>
</dbReference>
<dbReference type="GO" id="GO:0046872">
    <property type="term" value="F:metal ion binding"/>
    <property type="evidence" value="ECO:0007669"/>
    <property type="project" value="UniProtKB-KW"/>
</dbReference>
<dbReference type="GO" id="GO:0043177">
    <property type="term" value="F:organic acid binding"/>
    <property type="evidence" value="ECO:0007669"/>
    <property type="project" value="TreeGrafter"/>
</dbReference>
<dbReference type="GO" id="GO:0019825">
    <property type="term" value="F:oxygen binding"/>
    <property type="evidence" value="ECO:0007669"/>
    <property type="project" value="InterPro"/>
</dbReference>
<dbReference type="GO" id="GO:0005344">
    <property type="term" value="F:oxygen carrier activity"/>
    <property type="evidence" value="ECO:0007669"/>
    <property type="project" value="UniProtKB-KW"/>
</dbReference>
<dbReference type="GO" id="GO:0004601">
    <property type="term" value="F:peroxidase activity"/>
    <property type="evidence" value="ECO:0007669"/>
    <property type="project" value="TreeGrafter"/>
</dbReference>
<dbReference type="GO" id="GO:0042744">
    <property type="term" value="P:hydrogen peroxide catabolic process"/>
    <property type="evidence" value="ECO:0007669"/>
    <property type="project" value="TreeGrafter"/>
</dbReference>
<dbReference type="CDD" id="cd08925">
    <property type="entry name" value="Hb-beta-like"/>
    <property type="match status" value="1"/>
</dbReference>
<dbReference type="FunFam" id="1.10.490.10:FF:000001">
    <property type="entry name" value="Hemoglobin subunit beta"/>
    <property type="match status" value="1"/>
</dbReference>
<dbReference type="Gene3D" id="1.10.490.10">
    <property type="entry name" value="Globins"/>
    <property type="match status" value="1"/>
</dbReference>
<dbReference type="InterPro" id="IPR000971">
    <property type="entry name" value="Globin"/>
</dbReference>
<dbReference type="InterPro" id="IPR009050">
    <property type="entry name" value="Globin-like_sf"/>
</dbReference>
<dbReference type="InterPro" id="IPR012292">
    <property type="entry name" value="Globin/Proto"/>
</dbReference>
<dbReference type="InterPro" id="IPR002337">
    <property type="entry name" value="Hemoglobin_b"/>
</dbReference>
<dbReference type="InterPro" id="IPR050056">
    <property type="entry name" value="Hemoglobin_oxygen_transport"/>
</dbReference>
<dbReference type="PANTHER" id="PTHR11442">
    <property type="entry name" value="HEMOGLOBIN FAMILY MEMBER"/>
    <property type="match status" value="1"/>
</dbReference>
<dbReference type="PANTHER" id="PTHR11442:SF42">
    <property type="entry name" value="HEMOGLOBIN SUBUNIT BETA"/>
    <property type="match status" value="1"/>
</dbReference>
<dbReference type="Pfam" id="PF00042">
    <property type="entry name" value="Globin"/>
    <property type="match status" value="1"/>
</dbReference>
<dbReference type="PRINTS" id="PR00814">
    <property type="entry name" value="BETAHAEM"/>
</dbReference>
<dbReference type="SUPFAM" id="SSF46458">
    <property type="entry name" value="Globin-like"/>
    <property type="match status" value="1"/>
</dbReference>
<dbReference type="PROSITE" id="PS01033">
    <property type="entry name" value="GLOBIN"/>
    <property type="match status" value="1"/>
</dbReference>
<sequence>MVHLTGDEKAAVTALWGKVNVDEVGGEALGRLLVVYPWTQRFFESFGDLSTPDAVMHNPKVKAHGKKVLGAFSDGLAHLDNLKGTFAQLSELHCDKLHVDPENFRLLGNVLVCVLAQHFGKEFTPQVQAAYQKVVAGVANALAHKYH</sequence>
<feature type="initiator methionine" description="Removed" evidence="1">
    <location>
        <position position="1"/>
    </location>
</feature>
<feature type="chain" id="PRO_0000052863" description="Hemoglobin subunit beta">
    <location>
        <begin position="2"/>
        <end position="147"/>
    </location>
</feature>
<feature type="domain" description="Globin" evidence="3">
    <location>
        <begin position="3"/>
        <end position="147"/>
    </location>
</feature>
<feature type="binding site" description="distal binding residue">
    <location>
        <position position="64"/>
    </location>
    <ligand>
        <name>heme b</name>
        <dbReference type="ChEBI" id="CHEBI:60344"/>
    </ligand>
    <ligandPart>
        <name>Fe</name>
        <dbReference type="ChEBI" id="CHEBI:18248"/>
    </ligandPart>
</feature>
<feature type="binding site" description="proximal binding residue">
    <location>
        <position position="93"/>
    </location>
    <ligand>
        <name>heme b</name>
        <dbReference type="ChEBI" id="CHEBI:60344"/>
    </ligand>
    <ligandPart>
        <name>Fe</name>
        <dbReference type="ChEBI" id="CHEBI:18248"/>
    </ligandPart>
</feature>
<feature type="modified residue" description="N-acetylvaline" evidence="1">
    <location>
        <position position="2"/>
    </location>
</feature>
<feature type="modified residue" description="Phosphothreonine" evidence="2">
    <location>
        <position position="13"/>
    </location>
</feature>
<feature type="modified residue" description="Phosphoserine" evidence="2">
    <location>
        <position position="45"/>
    </location>
</feature>
<feature type="modified residue" description="N6-acetyllysine" evidence="2">
    <location>
        <position position="60"/>
    </location>
</feature>
<feature type="modified residue" description="N6-acetyllysine" evidence="2">
    <location>
        <position position="83"/>
    </location>
</feature>
<feature type="modified residue" description="S-nitrosocysteine" evidence="2">
    <location>
        <position position="94"/>
    </location>
</feature>
<feature type="modified residue" description="N6-acetyllysine" evidence="2">
    <location>
        <position position="145"/>
    </location>
</feature>
<organism>
    <name type="scientific">Alouatta belzebul</name>
    <name type="common">Red-handed howler monkey</name>
    <dbReference type="NCBI Taxonomy" id="30590"/>
    <lineage>
        <taxon>Eukaryota</taxon>
        <taxon>Metazoa</taxon>
        <taxon>Chordata</taxon>
        <taxon>Craniata</taxon>
        <taxon>Vertebrata</taxon>
        <taxon>Euteleostomi</taxon>
        <taxon>Mammalia</taxon>
        <taxon>Eutheria</taxon>
        <taxon>Euarchontoglires</taxon>
        <taxon>Primates</taxon>
        <taxon>Haplorrhini</taxon>
        <taxon>Platyrrhini</taxon>
        <taxon>Atelidae</taxon>
        <taxon>Alouattinae</taxon>
        <taxon>Alouatta</taxon>
    </lineage>
</organism>
<accession>Q6WN29</accession>
<reference key="1">
    <citation type="submission" date="2003-04" db="EMBL/GenBank/DDBJ databases">
        <title>The molecular evolution of the primate beta globin gene: an evaluation of gene conversion and phylogeny and an analysis of phylogenetic footprints in noncoding DNA.</title>
        <authorList>
            <person name="Prychitko T.M."/>
            <person name="Goodman M."/>
            <person name="Johnson R.M."/>
        </authorList>
    </citation>
    <scope>NUCLEOTIDE SEQUENCE [GENOMIC DNA]</scope>
</reference>
<proteinExistence type="evidence at transcript level"/>
<gene>
    <name type="primary">HBB</name>
</gene>
<comment type="function">
    <text>Involved in oxygen transport from the lung to the various peripheral tissues.</text>
</comment>
<comment type="subunit">
    <text>Heterotetramer of two alpha chains and two beta chains.</text>
</comment>
<comment type="tissue specificity">
    <text>Red blood cells.</text>
</comment>
<comment type="similarity">
    <text evidence="3">Belongs to the globin family.</text>
</comment>